<feature type="chain" id="PRO_0000308899" description="Calcium-binding and coiled-coil domain-containing protein 1">
    <location>
        <begin position="1"/>
        <end position="691"/>
    </location>
</feature>
<feature type="zinc finger region" description="UBZ1-type" evidence="4">
    <location>
        <begin position="653"/>
        <end position="679"/>
    </location>
</feature>
<feature type="region of interest" description="N-terminal AD (CTNNB1 binding site)" evidence="1">
    <location>
        <begin position="1"/>
        <end position="190"/>
    </location>
</feature>
<feature type="region of interest" description="p300 KIX-binding" evidence="1">
    <location>
        <begin position="1"/>
        <end position="30"/>
    </location>
</feature>
<feature type="region of interest" description="Interaction with GATA1" evidence="2">
    <location>
        <begin position="45"/>
        <end position="125"/>
    </location>
</feature>
<feature type="region of interest" description="C-terminal AD (CTNNB1 binding site); interaction with CCAR1" evidence="2">
    <location>
        <begin position="501"/>
        <end position="691"/>
    </location>
</feature>
<feature type="region of interest" description="Disordered" evidence="5">
    <location>
        <begin position="514"/>
        <end position="606"/>
    </location>
</feature>
<feature type="coiled-coil region" evidence="3">
    <location>
        <begin position="145"/>
        <end position="205"/>
    </location>
</feature>
<feature type="coiled-coil region" evidence="3">
    <location>
        <begin position="232"/>
        <end position="339"/>
    </location>
</feature>
<feature type="coiled-coil region" evidence="3">
    <location>
        <begin position="417"/>
        <end position="514"/>
    </location>
</feature>
<feature type="binding site" evidence="4">
    <location>
        <position position="656"/>
    </location>
    <ligand>
        <name>Zn(2+)</name>
        <dbReference type="ChEBI" id="CHEBI:29105"/>
    </ligand>
</feature>
<feature type="binding site" evidence="4">
    <location>
        <position position="659"/>
    </location>
    <ligand>
        <name>Zn(2+)</name>
        <dbReference type="ChEBI" id="CHEBI:29105"/>
    </ligand>
</feature>
<feature type="binding site" evidence="4">
    <location>
        <position position="675"/>
    </location>
    <ligand>
        <name>Zn(2+)</name>
        <dbReference type="ChEBI" id="CHEBI:29105"/>
    </ligand>
</feature>
<feature type="binding site" evidence="4">
    <location>
        <position position="679"/>
    </location>
    <ligand>
        <name>Zn(2+)</name>
        <dbReference type="ChEBI" id="CHEBI:29105"/>
    </ligand>
</feature>
<feature type="modified residue" description="Phosphoserine" evidence="13">
    <location>
        <position position="4"/>
    </location>
</feature>
<feature type="splice variant" id="VSP_041471" description="In isoform 4." evidence="10">
    <location>
        <begin position="87"/>
        <end position="119"/>
    </location>
</feature>
<feature type="splice variant" id="VSP_041472" description="In isoform 4." evidence="10">
    <location>
        <begin position="287"/>
        <end position="338"/>
    </location>
</feature>
<feature type="splice variant" id="VSP_029052" description="In isoform 3." evidence="10">
    <location>
        <position position="598"/>
    </location>
</feature>
<feature type="splice variant" id="VSP_029053" description="In isoform 2." evidence="9 11">
    <original>SGFTVGTLSETSTGGPATPTWKECPICKERFPAESDKDALEDHMDGHFFFSTQDPFTFE</original>
    <variation>R</variation>
    <location>
        <begin position="633"/>
        <end position="691"/>
    </location>
</feature>
<feature type="sequence variant" id="VAR_036881" description="In dbSNP:rs3741659." evidence="6">
    <original>R</original>
    <variation>K</variation>
    <location>
        <position position="393"/>
    </location>
</feature>
<feature type="sequence conflict" description="In Ref. 5; BAG53720." evidence="12" ref="5">
    <original>H</original>
    <variation>R</variation>
    <location>
        <position position="381"/>
    </location>
</feature>
<feature type="sequence conflict" description="In Ref. 7; CAG38598." evidence="12" ref="7">
    <original>K</original>
    <variation>R</variation>
    <location>
        <position position="486"/>
    </location>
</feature>
<feature type="sequence conflict" description="In Ref. 7; CAG38598." evidence="12" ref="7">
    <original>K</original>
    <variation>E</variation>
    <location>
        <position position="660"/>
    </location>
</feature>
<dbReference type="EMBL" id="AY563137">
    <property type="protein sequence ID" value="AAT68474.1"/>
    <property type="molecule type" value="mRNA"/>
</dbReference>
<dbReference type="EMBL" id="AB040969">
    <property type="protein sequence ID" value="BAA96060.1"/>
    <property type="status" value="ALT_INIT"/>
    <property type="molecule type" value="mRNA"/>
</dbReference>
<dbReference type="EMBL" id="AL136895">
    <property type="protein sequence ID" value="CAB66829.1"/>
    <property type="molecule type" value="mRNA"/>
</dbReference>
<dbReference type="EMBL" id="AY358397">
    <property type="protein sequence ID" value="AAQ88763.1"/>
    <property type="molecule type" value="mRNA"/>
</dbReference>
<dbReference type="EMBL" id="AK122773">
    <property type="protein sequence ID" value="BAG53720.1"/>
    <property type="molecule type" value="mRNA"/>
</dbReference>
<dbReference type="EMBL" id="AK027881">
    <property type="protein sequence ID" value="BAB55428.1"/>
    <property type="molecule type" value="mRNA"/>
</dbReference>
<dbReference type="EMBL" id="AF370415">
    <property type="protein sequence ID" value="AAQ15251.1"/>
    <property type="molecule type" value="mRNA"/>
</dbReference>
<dbReference type="EMBL" id="CR533567">
    <property type="protein sequence ID" value="CAG38598.1"/>
    <property type="molecule type" value="mRNA"/>
</dbReference>
<dbReference type="EMBL" id="CH471054">
    <property type="protein sequence ID" value="EAW96728.1"/>
    <property type="molecule type" value="Genomic_DNA"/>
</dbReference>
<dbReference type="EMBL" id="BC003177">
    <property type="protein sequence ID" value="AAH03177.1"/>
    <property type="molecule type" value="mRNA"/>
</dbReference>
<dbReference type="EMBL" id="AY211909">
    <property type="protein sequence ID" value="AAO65163.1"/>
    <property type="molecule type" value="mRNA"/>
</dbReference>
<dbReference type="CCDS" id="CCDS44908.1">
    <molecule id="Q9P1Z2-4"/>
</dbReference>
<dbReference type="CCDS" id="CCDS8864.1">
    <molecule id="Q9P1Z2-1"/>
</dbReference>
<dbReference type="RefSeq" id="NP_001137154.1">
    <molecule id="Q9P1Z2-4"/>
    <property type="nucleotide sequence ID" value="NM_001143682.2"/>
</dbReference>
<dbReference type="RefSeq" id="NP_065949.1">
    <molecule id="Q9P1Z2-1"/>
    <property type="nucleotide sequence ID" value="NM_020898.3"/>
</dbReference>
<dbReference type="RefSeq" id="XP_016875196.1">
    <property type="nucleotide sequence ID" value="XM_017019707.1"/>
</dbReference>
<dbReference type="SMR" id="Q9P1Z2"/>
<dbReference type="BioGRID" id="121692">
    <property type="interactions" value="83"/>
</dbReference>
<dbReference type="CORUM" id="Q9P1Z2"/>
<dbReference type="DIP" id="DIP-47322N"/>
<dbReference type="FunCoup" id="Q9P1Z2">
    <property type="interactions" value="1726"/>
</dbReference>
<dbReference type="IntAct" id="Q9P1Z2">
    <property type="interactions" value="66"/>
</dbReference>
<dbReference type="MINT" id="Q9P1Z2"/>
<dbReference type="STRING" id="9606.ENSP00000449960"/>
<dbReference type="GlyGen" id="Q9P1Z2">
    <property type="glycosylation" value="1 site, 1 O-linked glycan (1 site)"/>
</dbReference>
<dbReference type="iPTMnet" id="Q9P1Z2"/>
<dbReference type="PhosphoSitePlus" id="Q9P1Z2"/>
<dbReference type="BioMuta" id="CALCOCO1"/>
<dbReference type="DMDM" id="160017736"/>
<dbReference type="CPTAC" id="CPTAC-1234"/>
<dbReference type="CPTAC" id="CPTAC-1235"/>
<dbReference type="jPOST" id="Q9P1Z2"/>
<dbReference type="MassIVE" id="Q9P1Z2"/>
<dbReference type="PaxDb" id="9606-ENSP00000449960"/>
<dbReference type="PeptideAtlas" id="Q9P1Z2"/>
<dbReference type="ProteomicsDB" id="83683">
    <molecule id="Q9P1Z2-1"/>
</dbReference>
<dbReference type="ProteomicsDB" id="83684">
    <molecule id="Q9P1Z2-2"/>
</dbReference>
<dbReference type="ProteomicsDB" id="83685">
    <molecule id="Q9P1Z2-3"/>
</dbReference>
<dbReference type="ProteomicsDB" id="83686">
    <molecule id="Q9P1Z2-4"/>
</dbReference>
<dbReference type="Pumba" id="Q9P1Z2"/>
<dbReference type="Antibodypedia" id="27237">
    <property type="antibodies" value="106 antibodies from 22 providers"/>
</dbReference>
<dbReference type="DNASU" id="57658"/>
<dbReference type="Ensembl" id="ENST00000262059.8">
    <molecule id="Q9P1Z2-3"/>
    <property type="protein sequence ID" value="ENSP00000262059.4"/>
    <property type="gene ID" value="ENSG00000012822.16"/>
</dbReference>
<dbReference type="Ensembl" id="ENST00000430117.6">
    <molecule id="Q9P1Z2-4"/>
    <property type="protein sequence ID" value="ENSP00000397189.2"/>
    <property type="gene ID" value="ENSG00000012822.16"/>
</dbReference>
<dbReference type="Ensembl" id="ENST00000548263.5">
    <molecule id="Q9P1Z2-2"/>
    <property type="protein sequence ID" value="ENSP00000447647.1"/>
    <property type="gene ID" value="ENSG00000012822.16"/>
</dbReference>
<dbReference type="Ensembl" id="ENST00000550804.6">
    <molecule id="Q9P1Z2-1"/>
    <property type="protein sequence ID" value="ENSP00000449960.1"/>
    <property type="gene ID" value="ENSG00000012822.16"/>
</dbReference>
<dbReference type="GeneID" id="57658"/>
<dbReference type="KEGG" id="hsa:57658"/>
<dbReference type="MANE-Select" id="ENST00000550804.6">
    <property type="protein sequence ID" value="ENSP00000449960.1"/>
    <property type="RefSeq nucleotide sequence ID" value="NM_020898.3"/>
    <property type="RefSeq protein sequence ID" value="NP_065949.1"/>
</dbReference>
<dbReference type="UCSC" id="uc001sef.4">
    <molecule id="Q9P1Z2-1"/>
    <property type="organism name" value="human"/>
</dbReference>
<dbReference type="AGR" id="HGNC:29306"/>
<dbReference type="CTD" id="57658"/>
<dbReference type="DisGeNET" id="57658"/>
<dbReference type="GeneCards" id="CALCOCO1"/>
<dbReference type="HGNC" id="HGNC:29306">
    <property type="gene designation" value="CALCOCO1"/>
</dbReference>
<dbReference type="HPA" id="ENSG00000012822">
    <property type="expression patterns" value="Low tissue specificity"/>
</dbReference>
<dbReference type="neXtProt" id="NX_Q9P1Z2"/>
<dbReference type="OpenTargets" id="ENSG00000012822"/>
<dbReference type="PharmGKB" id="PA128394699"/>
<dbReference type="VEuPathDB" id="HostDB:ENSG00000012822"/>
<dbReference type="eggNOG" id="ENOG502QR9J">
    <property type="taxonomic scope" value="Eukaryota"/>
</dbReference>
<dbReference type="GeneTree" id="ENSGT00950000183025"/>
<dbReference type="HOGENOM" id="CLU_028857_0_0_1"/>
<dbReference type="InParanoid" id="Q9P1Z2"/>
<dbReference type="OMA" id="HNWASND"/>
<dbReference type="OrthoDB" id="10015001at2759"/>
<dbReference type="PAN-GO" id="Q9P1Z2">
    <property type="GO annotations" value="2 GO annotations based on evolutionary models"/>
</dbReference>
<dbReference type="PhylomeDB" id="Q9P1Z2"/>
<dbReference type="TreeFam" id="TF329501"/>
<dbReference type="PathwayCommons" id="Q9P1Z2"/>
<dbReference type="SignaLink" id="Q9P1Z2"/>
<dbReference type="SIGNOR" id="Q9P1Z2"/>
<dbReference type="BioGRID-ORCS" id="57658">
    <property type="hits" value="12 hits in 1160 CRISPR screens"/>
</dbReference>
<dbReference type="CD-CODE" id="FB4E32DD">
    <property type="entry name" value="Presynaptic clusters and postsynaptic densities"/>
</dbReference>
<dbReference type="ChiTaRS" id="CALCOCO1">
    <property type="organism name" value="human"/>
</dbReference>
<dbReference type="GeneWiki" id="CALCOCO1"/>
<dbReference type="GenomeRNAi" id="57658"/>
<dbReference type="Pharos" id="Q9P1Z2">
    <property type="development level" value="Tbio"/>
</dbReference>
<dbReference type="PRO" id="PR:Q9P1Z2"/>
<dbReference type="Proteomes" id="UP000005640">
    <property type="component" value="Chromosome 12"/>
</dbReference>
<dbReference type="RNAct" id="Q9P1Z2">
    <property type="molecule type" value="protein"/>
</dbReference>
<dbReference type="Bgee" id="ENSG00000012822">
    <property type="expression patterns" value="Expressed in mucosa of stomach and 203 other cell types or tissues"/>
</dbReference>
<dbReference type="ExpressionAtlas" id="Q9P1Z2">
    <property type="expression patterns" value="baseline and differential"/>
</dbReference>
<dbReference type="GO" id="GO:0000785">
    <property type="term" value="C:chromatin"/>
    <property type="evidence" value="ECO:0007669"/>
    <property type="project" value="Ensembl"/>
</dbReference>
<dbReference type="GO" id="GO:0005829">
    <property type="term" value="C:cytosol"/>
    <property type="evidence" value="ECO:0000314"/>
    <property type="project" value="HPA"/>
</dbReference>
<dbReference type="GO" id="GO:0043231">
    <property type="term" value="C:intracellular membrane-bounded organelle"/>
    <property type="evidence" value="ECO:0000314"/>
    <property type="project" value="HPA"/>
</dbReference>
<dbReference type="GO" id="GO:0005634">
    <property type="term" value="C:nucleus"/>
    <property type="evidence" value="ECO:0000314"/>
    <property type="project" value="LIFEdb"/>
</dbReference>
<dbReference type="GO" id="GO:0008013">
    <property type="term" value="F:beta-catenin binding"/>
    <property type="evidence" value="ECO:0000353"/>
    <property type="project" value="AgBase"/>
</dbReference>
<dbReference type="GO" id="GO:0003682">
    <property type="term" value="F:chromatin binding"/>
    <property type="evidence" value="ECO:0007669"/>
    <property type="project" value="Ensembl"/>
</dbReference>
<dbReference type="GO" id="GO:0000978">
    <property type="term" value="F:RNA polymerase II cis-regulatory region sequence-specific DNA binding"/>
    <property type="evidence" value="ECO:0000314"/>
    <property type="project" value="UniProtKB"/>
</dbReference>
<dbReference type="GO" id="GO:0043565">
    <property type="term" value="F:sequence-specific DNA binding"/>
    <property type="evidence" value="ECO:0000314"/>
    <property type="project" value="AgBase"/>
</dbReference>
<dbReference type="GO" id="GO:0003713">
    <property type="term" value="F:transcription coactivator activity"/>
    <property type="evidence" value="ECO:0000315"/>
    <property type="project" value="UniProtKB"/>
</dbReference>
<dbReference type="GO" id="GO:0003712">
    <property type="term" value="F:transcription coregulator activity"/>
    <property type="evidence" value="ECO:0000314"/>
    <property type="project" value="UniProtKB"/>
</dbReference>
<dbReference type="GO" id="GO:0008270">
    <property type="term" value="F:zinc ion binding"/>
    <property type="evidence" value="ECO:0007669"/>
    <property type="project" value="UniProtKB-KW"/>
</dbReference>
<dbReference type="GO" id="GO:0030518">
    <property type="term" value="P:nuclear receptor-mediated steroid hormone signaling pathway"/>
    <property type="evidence" value="ECO:0000250"/>
    <property type="project" value="HGNC-UCL"/>
</dbReference>
<dbReference type="GO" id="GO:0045893">
    <property type="term" value="P:positive regulation of DNA-templated transcription"/>
    <property type="evidence" value="ECO:0000315"/>
    <property type="project" value="UniProtKB"/>
</dbReference>
<dbReference type="GO" id="GO:0010628">
    <property type="term" value="P:positive regulation of gene expression"/>
    <property type="evidence" value="ECO:0000314"/>
    <property type="project" value="AgBase"/>
</dbReference>
<dbReference type="GO" id="GO:0045944">
    <property type="term" value="P:positive regulation of transcription by RNA polymerase II"/>
    <property type="evidence" value="ECO:0000250"/>
    <property type="project" value="HGNC-UCL"/>
</dbReference>
<dbReference type="GO" id="GO:0007165">
    <property type="term" value="P:signal transduction"/>
    <property type="evidence" value="ECO:0000250"/>
    <property type="project" value="HGNC-UCL"/>
</dbReference>
<dbReference type="GO" id="GO:0016055">
    <property type="term" value="P:Wnt signaling pathway"/>
    <property type="evidence" value="ECO:0007669"/>
    <property type="project" value="UniProtKB-KW"/>
</dbReference>
<dbReference type="CDD" id="cd21967">
    <property type="entry name" value="Zn-C2H2_CALCOCO1"/>
    <property type="match status" value="1"/>
</dbReference>
<dbReference type="FunFam" id="2.60.40.2840:FF:000004">
    <property type="entry name" value="Calcium-binding and coiled-coil domain-containing protein 1"/>
    <property type="match status" value="1"/>
</dbReference>
<dbReference type="Gene3D" id="2.60.40.2840">
    <property type="match status" value="1"/>
</dbReference>
<dbReference type="Gene3D" id="6.20.250.40">
    <property type="match status" value="1"/>
</dbReference>
<dbReference type="InterPro" id="IPR012852">
    <property type="entry name" value="CALCOCO1-like"/>
</dbReference>
<dbReference type="InterPro" id="IPR041641">
    <property type="entry name" value="CALCOCO1/2_Zn_UBZ1"/>
</dbReference>
<dbReference type="InterPro" id="IPR041611">
    <property type="entry name" value="SKICH"/>
</dbReference>
<dbReference type="InterPro" id="IPR051002">
    <property type="entry name" value="UBA_autophagy_assoc_protein"/>
</dbReference>
<dbReference type="PANTHER" id="PTHR31915:SF5">
    <property type="entry name" value="CALCIUM-BINDING AND COILED-COIL DOMAIN-CONTAINING PROTEIN 1"/>
    <property type="match status" value="1"/>
</dbReference>
<dbReference type="PANTHER" id="PTHR31915">
    <property type="entry name" value="SKICH DOMAIN-CONTAINING PROTEIN"/>
    <property type="match status" value="1"/>
</dbReference>
<dbReference type="Pfam" id="PF07888">
    <property type="entry name" value="CALCOCO1"/>
    <property type="match status" value="1"/>
</dbReference>
<dbReference type="Pfam" id="PF17751">
    <property type="entry name" value="SKICH"/>
    <property type="match status" value="1"/>
</dbReference>
<dbReference type="Pfam" id="PF18112">
    <property type="entry name" value="Zn-C2H2_12"/>
    <property type="match status" value="1"/>
</dbReference>
<dbReference type="PROSITE" id="PS51905">
    <property type="entry name" value="ZF_UBZ1"/>
    <property type="match status" value="1"/>
</dbReference>
<sequence>MEESPLSRAPSRGGVNFLNVARTYIPNTKVECHYTLPPGTMPSASDWIGIFKVEAACVRDYHTFVWSSVPESTTDGSPIHTSVQFQASYLPKPGAQLYQFRYVNRQGQVCGQSPPFQFREPRPMDELVTLEEADGGSDILLVVPKATVLQNQLDESQQERNDLMQLKLQLEGQVTELRSRVQELERALATARQEHTELMEQYKGISRSHGEITEERDILSRQQGDHVARILELEDDIQTISEKVLTKEVELDRLRDTVKALTREQEKLLGQLKEVQADKEQSEAELQVAQQENHHLNLDLKEAKSWQEEQSAQAQRLKDKVAQMKDTLGQAQQRVAELEPLKEQLRGAQELAASSQQKATLLGEELASAAAARDRTIAELHRSRLEVAEVNGRLAELGLHLKEEKCQWSKERAGLLQSVEAEKDKILKLSAEILRLEKAVQEERTQNQVFKTELAREKDSSLVQLSESKRELTELRSALRVLQKEKEQLQEEKQELLEYMRKLEARLEKVADEKWNEDATTEDEEAAVGLSCPAALTDSEDESPEDMRLPPYGLCERGDPGSSPAGPREASPLVVISQPAPISPHLSGPAEDSSSDSEAEDEKSVLMAAVQSGGEEANLLLPELGSAFYDMASGFTVGTLSETSTGGPATPTWKECPICKERFPAESDKDALEDHMDGHFFFSTQDPFTFE</sequence>
<proteinExistence type="evidence at protein level"/>
<keyword id="KW-0010">Activator</keyword>
<keyword id="KW-0025">Alternative splicing</keyword>
<keyword id="KW-0175">Coiled coil</keyword>
<keyword id="KW-0963">Cytoplasm</keyword>
<keyword id="KW-0479">Metal-binding</keyword>
<keyword id="KW-0539">Nucleus</keyword>
<keyword id="KW-0597">Phosphoprotein</keyword>
<keyword id="KW-1267">Proteomics identification</keyword>
<keyword id="KW-1185">Reference proteome</keyword>
<keyword id="KW-0804">Transcription</keyword>
<keyword id="KW-0805">Transcription regulation</keyword>
<keyword id="KW-0879">Wnt signaling pathway</keyword>
<keyword id="KW-0862">Zinc</keyword>
<keyword id="KW-0863">Zinc-finger</keyword>
<evidence type="ECO:0000250" key="1"/>
<evidence type="ECO:0000250" key="2">
    <source>
        <dbReference type="UniProtKB" id="Q8CGU1"/>
    </source>
</evidence>
<evidence type="ECO:0000255" key="3"/>
<evidence type="ECO:0000255" key="4">
    <source>
        <dbReference type="PROSITE-ProRule" id="PRU01253"/>
    </source>
</evidence>
<evidence type="ECO:0000256" key="5">
    <source>
        <dbReference type="SAM" id="MobiDB-lite"/>
    </source>
</evidence>
<evidence type="ECO:0000269" key="6">
    <source>
    </source>
</evidence>
<evidence type="ECO:0000269" key="7">
    <source>
    </source>
</evidence>
<evidence type="ECO:0000269" key="8">
    <source ref="1"/>
</evidence>
<evidence type="ECO:0000303" key="9">
    <source>
    </source>
</evidence>
<evidence type="ECO:0000303" key="10">
    <source>
    </source>
</evidence>
<evidence type="ECO:0000303" key="11">
    <source>
    </source>
</evidence>
<evidence type="ECO:0000305" key="12"/>
<evidence type="ECO:0007744" key="13">
    <source>
    </source>
</evidence>
<name>CACO1_HUMAN</name>
<comment type="function">
    <text evidence="2 7">Functions as a coactivator for aryl hydrocarbon and nuclear receptors (NR). Recruited to promoters through its contact with the N-terminal basic helix-loop-helix-Per-Arnt-Sim (PAS) domain of transcription factors or coactivators, such as NCOA2. During ER-activation acts synergistically in combination with other NCOA2-binding proteins, such as EP300, CREBBP and CARM1. Involved in the transcriptional activation of target genes in the Wnt/CTNNB1 pathway. Functions as a secondary coactivator in LEF1-mediated transcriptional activation via its interaction with CTNNB1. Coactivator function for nuclear receptors and LEF1/CTNNB1 involves differential utilization of two different activation regions (By similarity). In association with CCAR1 enhances GATA1- and MED1-mediated transcriptional activation from the gamma-globin promoter during erythroid differentiation of K562 erythroleukemia cells (PubMed:24245781).</text>
</comment>
<comment type="function">
    <text evidence="8">Seems to enhance inorganic pyrophosphatase thus activating phosphogluomutase (PMG). Probably functions as a component of the calphoglin complex, which is involved in linking cellular metabolism (phosphate and glucose metabolism) with other core functions including protein synthesis and degradation, calcium signaling and cell growth.</text>
</comment>
<comment type="subunit">
    <text evidence="2 8">Part of a calphoglin complex consisting of CALCOCO1, PPA1 and PGM (Ref.1). Interacts with the bHLH-PAS domains of GRIP1, AHR and ARNT. Interacts with CTNNB1 via both its N- and C-terminal regions. Interacts with EP300. Interacts with CCAR1 (via N-terminus) and GATA1 (By similarity).</text>
</comment>
<comment type="interaction">
    <interactant intactId="EBI-749920">
        <id>Q9P1Z2</id>
    </interactant>
    <interactant intactId="EBI-10229433">
        <id>Q13515</id>
        <label>BFSP2</label>
    </interactant>
    <organismsDiffer>false</organismsDiffer>
    <experiments>4</experiments>
</comment>
<comment type="interaction">
    <interactant intactId="EBI-749920">
        <id>Q9P1Z2</id>
    </interactant>
    <interactant intactId="EBI-741885">
        <id>Q96LK0</id>
        <label>CEP19</label>
    </interactant>
    <organismsDiffer>false</organismsDiffer>
    <experiments>6</experiments>
</comment>
<comment type="interaction">
    <interactant intactId="EBI-749920">
        <id>Q9P1Z2</id>
    </interactant>
    <interactant intactId="EBI-5453285">
        <id>Q2TBE0</id>
        <label>CWF19L2</label>
    </interactant>
    <organismsDiffer>false</organismsDiffer>
    <experiments>6</experiments>
</comment>
<comment type="interaction">
    <interactant intactId="EBI-749920">
        <id>Q9P1Z2</id>
    </interactant>
    <interactant intactId="EBI-749800">
        <id>Q9UII6</id>
        <label>DUSP13B</label>
    </interactant>
    <organismsDiffer>false</organismsDiffer>
    <experiments>6</experiments>
</comment>
<comment type="interaction">
    <interactant intactId="EBI-749920">
        <id>Q9P1Z2</id>
    </interactant>
    <interactant intactId="EBI-744099">
        <id>Q9H0I2</id>
        <label>ENKD1</label>
    </interactant>
    <organismsDiffer>false</organismsDiffer>
    <experiments>3</experiments>
</comment>
<comment type="interaction">
    <interactant intactId="EBI-749920">
        <id>Q9P1Z2</id>
    </interactant>
    <interactant intactId="EBI-719941">
        <id>Q3B820</id>
        <label>FAM161A</label>
    </interactant>
    <organismsDiffer>false</organismsDiffer>
    <experiments>3</experiments>
</comment>
<comment type="interaction">
    <interactant intactId="EBI-749920">
        <id>Q9P1Z2</id>
    </interactant>
    <interactant intactId="EBI-746969">
        <id>Q9H0R8</id>
        <label>GABARAPL1</label>
    </interactant>
    <organismsDiffer>false</organismsDiffer>
    <experiments>3</experiments>
</comment>
<comment type="interaction">
    <interactant intactId="EBI-749920">
        <id>Q9P1Z2</id>
    </interactant>
    <interactant intactId="EBI-720116">
        <id>P60520</id>
        <label>GABARAPL2</label>
    </interactant>
    <organismsDiffer>false</organismsDiffer>
    <experiments>3</experiments>
</comment>
<comment type="interaction">
    <interactant intactId="EBI-749920">
        <id>Q9P1Z2</id>
    </interactant>
    <interactant intactId="EBI-2805787">
        <id>Q96CN7</id>
        <label>ISOC1</label>
    </interactant>
    <organismsDiffer>false</organismsDiffer>
    <experiments>3</experiments>
</comment>
<comment type="interaction">
    <interactant intactId="EBI-749920">
        <id>Q9P1Z2</id>
    </interactant>
    <interactant intactId="EBI-715849">
        <id>O14777</id>
        <label>NDC80</label>
    </interactant>
    <organismsDiffer>false</organismsDiffer>
    <experiments>5</experiments>
</comment>
<comment type="interaction">
    <interactant intactId="EBI-749920">
        <id>Q9P1Z2</id>
    </interactant>
    <interactant intactId="EBI-1383852">
        <id>P54646</id>
        <label>PRKAA2</label>
    </interactant>
    <organismsDiffer>false</organismsDiffer>
    <experiments>3</experiments>
</comment>
<comment type="interaction">
    <interactant intactId="EBI-749920">
        <id>Q9P1Z2</id>
    </interactant>
    <interactant intactId="EBI-373337">
        <id>O76064</id>
        <label>RNF8</label>
    </interactant>
    <organismsDiffer>false</organismsDiffer>
    <experiments>3</experiments>
</comment>
<comment type="interaction">
    <interactant intactId="EBI-749920">
        <id>Q9P1Z2</id>
    </interactant>
    <interactant intactId="EBI-1048247">
        <id>Q8TC07</id>
        <label>TBC1D15</label>
    </interactant>
    <organismsDiffer>false</organismsDiffer>
    <experiments>3</experiments>
</comment>
<comment type="interaction">
    <interactant intactId="EBI-749920">
        <id>Q9P1Z2</id>
    </interactant>
    <interactant intactId="EBI-2682299">
        <id>Q96NC0</id>
        <label>ZMAT2</label>
    </interactant>
    <organismsDiffer>false</organismsDiffer>
    <experiments>3</experiments>
</comment>
<comment type="subcellular location">
    <subcellularLocation>
        <location>Cytoplasm</location>
    </subcellularLocation>
    <subcellularLocation>
        <location>Nucleus</location>
    </subcellularLocation>
    <text evidence="1">Shuttles between nucleus and cytoplasm.</text>
</comment>
<comment type="alternative products">
    <event type="alternative splicing"/>
    <isoform>
        <id>Q9P1Z2-1</id>
        <name>1</name>
        <sequence type="displayed"/>
    </isoform>
    <isoform>
        <id>Q9P1Z2-2</id>
        <name>2</name>
        <sequence type="described" ref="VSP_029053"/>
    </isoform>
    <isoform>
        <id>Q9P1Z2-3</id>
        <name>3</name>
        <sequence type="described" ref="VSP_029052"/>
    </isoform>
    <isoform>
        <id>Q9P1Z2-4</id>
        <name>4</name>
        <sequence type="described" ref="VSP_041471 VSP_041472"/>
    </isoform>
</comment>
<comment type="domain">
    <text evidence="1">The C-terminal activation region (AD) is used for downstream signaling. Seems to be essential for coactivator function with nuclear receptors and with the aryl hydrocarbon receptor (By similarity).</text>
</comment>
<comment type="domain">
    <text evidence="1">The N-terminal activation region (AD) is necessary and sufficient for synergistic activation of LEF1-mediated transcription by CTNNB1. Contains a EP3000 binding region which is important for synergistic cooperation (By similarity).</text>
</comment>
<comment type="domain">
    <text evidence="1">Recruitment by nuclear receptors is accomplished by the interaction of the coiled-coiled domain with p160 coactivators.</text>
</comment>
<comment type="similarity">
    <text evidence="12">Belongs to the CALCOCO family.</text>
</comment>
<comment type="sequence caution" evidence="12">
    <conflict type="erroneous initiation">
        <sequence resource="EMBL-CDS" id="BAA96060"/>
    </conflict>
</comment>
<gene>
    <name type="primary">CALCOCO1</name>
    <name type="synonym">KIAA1536</name>
    <name type="ORF">PP13275</name>
    <name type="ORF">UNQ2436/PRO4996</name>
</gene>
<organism>
    <name type="scientific">Homo sapiens</name>
    <name type="common">Human</name>
    <dbReference type="NCBI Taxonomy" id="9606"/>
    <lineage>
        <taxon>Eukaryota</taxon>
        <taxon>Metazoa</taxon>
        <taxon>Chordata</taxon>
        <taxon>Craniata</taxon>
        <taxon>Vertebrata</taxon>
        <taxon>Euteleostomi</taxon>
        <taxon>Mammalia</taxon>
        <taxon>Eutheria</taxon>
        <taxon>Euarchontoglires</taxon>
        <taxon>Primates</taxon>
        <taxon>Haplorrhini</taxon>
        <taxon>Catarrhini</taxon>
        <taxon>Hominidae</taxon>
        <taxon>Homo</taxon>
    </lineage>
</organism>
<protein>
    <recommendedName>
        <fullName>Calcium-binding and coiled-coil domain-containing protein 1</fullName>
    </recommendedName>
    <alternativeName>
        <fullName>Calphoglin</fullName>
    </alternativeName>
    <alternativeName>
        <fullName>Coiled-coil coactivator protein</fullName>
    </alternativeName>
    <alternativeName>
        <fullName>Sarcoma antigen NY-SAR-3</fullName>
    </alternativeName>
</protein>
<accession>Q9P1Z2</accession>
<accession>B3KVA8</accession>
<accession>Q6FI59</accession>
<accession>Q71RC3</accession>
<accession>Q86WF8</accession>
<accession>Q96JU3</accession>
<accession>Q9H090</accession>
<reference key="1">
    <citation type="journal article" date="2004" name="Biochem. Biophys. Res. Commun.">
        <title>Cellular signaling mediated by calphoglin-induced activation of IPP and PGM.</title>
        <authorList>
            <person name="Takahashi K."/>
            <person name="Inuzuka M."/>
            <person name="Ingi T."/>
        </authorList>
    </citation>
    <scope>NUCLEOTIDE SEQUENCE [MRNA] (ISOFORM 1)</scope>
    <scope>FUNCTION</scope>
    <scope>INTERACTION WITH PHOSPHOGLUCOMUTASE AND PPA1</scope>
</reference>
<reference key="2">
    <citation type="journal article" date="2000" name="DNA Res.">
        <title>Prediction of the coding sequences of unidentified human genes. XVII. The complete sequences of 100 new cDNA clones from brain which code for large proteins in vitro.</title>
        <authorList>
            <person name="Nagase T."/>
            <person name="Kikuno R."/>
            <person name="Ishikawa K."/>
            <person name="Hirosawa M."/>
            <person name="Ohara O."/>
        </authorList>
    </citation>
    <scope>NUCLEOTIDE SEQUENCE [LARGE SCALE MRNA] (ISOFORM 2)</scope>
    <source>
        <tissue>Brain</tissue>
    </source>
</reference>
<reference key="3">
    <citation type="journal article" date="2001" name="Genome Res.">
        <title>Towards a catalog of human genes and proteins: sequencing and analysis of 500 novel complete protein coding human cDNAs.</title>
        <authorList>
            <person name="Wiemann S."/>
            <person name="Weil B."/>
            <person name="Wellenreuther R."/>
            <person name="Gassenhuber J."/>
            <person name="Glassl S."/>
            <person name="Ansorge W."/>
            <person name="Boecher M."/>
            <person name="Bloecker H."/>
            <person name="Bauersachs S."/>
            <person name="Blum H."/>
            <person name="Lauber J."/>
            <person name="Duesterhoeft A."/>
            <person name="Beyer A."/>
            <person name="Koehrer K."/>
            <person name="Strack N."/>
            <person name="Mewes H.-W."/>
            <person name="Ottenwaelder B."/>
            <person name="Obermaier B."/>
            <person name="Tampe J."/>
            <person name="Heubner D."/>
            <person name="Wambutt R."/>
            <person name="Korn B."/>
            <person name="Klein M."/>
            <person name="Poustka A."/>
        </authorList>
    </citation>
    <scope>NUCLEOTIDE SEQUENCE [LARGE SCALE MRNA] (ISOFORM 1)</scope>
    <source>
        <tissue>Testis</tissue>
    </source>
</reference>
<reference key="4">
    <citation type="journal article" date="2003" name="Genome Res.">
        <title>The secreted protein discovery initiative (SPDI), a large-scale effort to identify novel human secreted and transmembrane proteins: a bioinformatics assessment.</title>
        <authorList>
            <person name="Clark H.F."/>
            <person name="Gurney A.L."/>
            <person name="Abaya E."/>
            <person name="Baker K."/>
            <person name="Baldwin D.T."/>
            <person name="Brush J."/>
            <person name="Chen J."/>
            <person name="Chow B."/>
            <person name="Chui C."/>
            <person name="Crowley C."/>
            <person name="Currell B."/>
            <person name="Deuel B."/>
            <person name="Dowd P."/>
            <person name="Eaton D."/>
            <person name="Foster J.S."/>
            <person name="Grimaldi C."/>
            <person name="Gu Q."/>
            <person name="Hass P.E."/>
            <person name="Heldens S."/>
            <person name="Huang A."/>
            <person name="Kim H.S."/>
            <person name="Klimowski L."/>
            <person name="Jin Y."/>
            <person name="Johnson S."/>
            <person name="Lee J."/>
            <person name="Lewis L."/>
            <person name="Liao D."/>
            <person name="Mark M.R."/>
            <person name="Robbie E."/>
            <person name="Sanchez C."/>
            <person name="Schoenfeld J."/>
            <person name="Seshagiri S."/>
            <person name="Simmons L."/>
            <person name="Singh J."/>
            <person name="Smith V."/>
            <person name="Stinson J."/>
            <person name="Vagts A."/>
            <person name="Vandlen R.L."/>
            <person name="Watanabe C."/>
            <person name="Wieand D."/>
            <person name="Woods K."/>
            <person name="Xie M.-H."/>
            <person name="Yansura D.G."/>
            <person name="Yi S."/>
            <person name="Yu G."/>
            <person name="Yuan J."/>
            <person name="Zhang M."/>
            <person name="Zhang Z."/>
            <person name="Goddard A.D."/>
            <person name="Wood W.I."/>
            <person name="Godowski P.J."/>
            <person name="Gray A.M."/>
        </authorList>
    </citation>
    <scope>NUCLEOTIDE SEQUENCE [LARGE SCALE MRNA] (ISOFORM 1)</scope>
</reference>
<reference key="5">
    <citation type="journal article" date="2004" name="Nat. Genet.">
        <title>Complete sequencing and characterization of 21,243 full-length human cDNAs.</title>
        <authorList>
            <person name="Ota T."/>
            <person name="Suzuki Y."/>
            <person name="Nishikawa T."/>
            <person name="Otsuki T."/>
            <person name="Sugiyama T."/>
            <person name="Irie R."/>
            <person name="Wakamatsu A."/>
            <person name="Hayashi K."/>
            <person name="Sato H."/>
            <person name="Nagai K."/>
            <person name="Kimura K."/>
            <person name="Makita H."/>
            <person name="Sekine M."/>
            <person name="Obayashi M."/>
            <person name="Nishi T."/>
            <person name="Shibahara T."/>
            <person name="Tanaka T."/>
            <person name="Ishii S."/>
            <person name="Yamamoto J."/>
            <person name="Saito K."/>
            <person name="Kawai Y."/>
            <person name="Isono Y."/>
            <person name="Nakamura Y."/>
            <person name="Nagahari K."/>
            <person name="Murakami K."/>
            <person name="Yasuda T."/>
            <person name="Iwayanagi T."/>
            <person name="Wagatsuma M."/>
            <person name="Shiratori A."/>
            <person name="Sudo H."/>
            <person name="Hosoiri T."/>
            <person name="Kaku Y."/>
            <person name="Kodaira H."/>
            <person name="Kondo H."/>
            <person name="Sugawara M."/>
            <person name="Takahashi M."/>
            <person name="Kanda K."/>
            <person name="Yokoi T."/>
            <person name="Furuya T."/>
            <person name="Kikkawa E."/>
            <person name="Omura Y."/>
            <person name="Abe K."/>
            <person name="Kamihara K."/>
            <person name="Katsuta N."/>
            <person name="Sato K."/>
            <person name="Tanikawa M."/>
            <person name="Yamazaki M."/>
            <person name="Ninomiya K."/>
            <person name="Ishibashi T."/>
            <person name="Yamashita H."/>
            <person name="Murakawa K."/>
            <person name="Fujimori K."/>
            <person name="Tanai H."/>
            <person name="Kimata M."/>
            <person name="Watanabe M."/>
            <person name="Hiraoka S."/>
            <person name="Chiba Y."/>
            <person name="Ishida S."/>
            <person name="Ono Y."/>
            <person name="Takiguchi S."/>
            <person name="Watanabe S."/>
            <person name="Yosida M."/>
            <person name="Hotuta T."/>
            <person name="Kusano J."/>
            <person name="Kanehori K."/>
            <person name="Takahashi-Fujii A."/>
            <person name="Hara H."/>
            <person name="Tanase T.-O."/>
            <person name="Nomura Y."/>
            <person name="Togiya S."/>
            <person name="Komai F."/>
            <person name="Hara R."/>
            <person name="Takeuchi K."/>
            <person name="Arita M."/>
            <person name="Imose N."/>
            <person name="Musashino K."/>
            <person name="Yuuki H."/>
            <person name="Oshima A."/>
            <person name="Sasaki N."/>
            <person name="Aotsuka S."/>
            <person name="Yoshikawa Y."/>
            <person name="Matsunawa H."/>
            <person name="Ichihara T."/>
            <person name="Shiohata N."/>
            <person name="Sano S."/>
            <person name="Moriya S."/>
            <person name="Momiyama H."/>
            <person name="Satoh N."/>
            <person name="Takami S."/>
            <person name="Terashima Y."/>
            <person name="Suzuki O."/>
            <person name="Nakagawa S."/>
            <person name="Senoh A."/>
            <person name="Mizoguchi H."/>
            <person name="Goto Y."/>
            <person name="Shimizu F."/>
            <person name="Wakebe H."/>
            <person name="Hishigaki H."/>
            <person name="Watanabe T."/>
            <person name="Sugiyama A."/>
            <person name="Takemoto M."/>
            <person name="Kawakami B."/>
            <person name="Yamazaki M."/>
            <person name="Watanabe K."/>
            <person name="Kumagai A."/>
            <person name="Itakura S."/>
            <person name="Fukuzumi Y."/>
            <person name="Fujimori Y."/>
            <person name="Komiyama M."/>
            <person name="Tashiro H."/>
            <person name="Tanigami A."/>
            <person name="Fujiwara T."/>
            <person name="Ono T."/>
            <person name="Yamada K."/>
            <person name="Fujii Y."/>
            <person name="Ozaki K."/>
            <person name="Hirao M."/>
            <person name="Ohmori Y."/>
            <person name="Kawabata A."/>
            <person name="Hikiji T."/>
            <person name="Kobatake N."/>
            <person name="Inagaki H."/>
            <person name="Ikema Y."/>
            <person name="Okamoto S."/>
            <person name="Okitani R."/>
            <person name="Kawakami T."/>
            <person name="Noguchi S."/>
            <person name="Itoh T."/>
            <person name="Shigeta K."/>
            <person name="Senba T."/>
            <person name="Matsumura K."/>
            <person name="Nakajima Y."/>
            <person name="Mizuno T."/>
            <person name="Morinaga M."/>
            <person name="Sasaki M."/>
            <person name="Togashi T."/>
            <person name="Oyama M."/>
            <person name="Hata H."/>
            <person name="Watanabe M."/>
            <person name="Komatsu T."/>
            <person name="Mizushima-Sugano J."/>
            <person name="Satoh T."/>
            <person name="Shirai Y."/>
            <person name="Takahashi Y."/>
            <person name="Nakagawa K."/>
            <person name="Okumura K."/>
            <person name="Nagase T."/>
            <person name="Nomura N."/>
            <person name="Kikuchi H."/>
            <person name="Masuho Y."/>
            <person name="Yamashita R."/>
            <person name="Nakai K."/>
            <person name="Yada T."/>
            <person name="Nakamura Y."/>
            <person name="Ohara O."/>
            <person name="Isogai T."/>
            <person name="Sugano S."/>
        </authorList>
    </citation>
    <scope>NUCLEOTIDE SEQUENCE [LARGE SCALE MRNA] (ISOFORMS 3 AND 4)</scope>
    <scope>VARIANT LYS-393</scope>
    <source>
        <tissue>Spleen</tissue>
        <tissue>Thyroid</tissue>
    </source>
</reference>
<reference key="6">
    <citation type="journal article" date="2004" name="Proc. Natl. Acad. Sci. U.S.A.">
        <title>Large-scale cDNA transfection screening for genes related to cancer development and progression.</title>
        <authorList>
            <person name="Wan D."/>
            <person name="Gong Y."/>
            <person name="Qin W."/>
            <person name="Zhang P."/>
            <person name="Li J."/>
            <person name="Wei L."/>
            <person name="Zhou X."/>
            <person name="Li H."/>
            <person name="Qiu X."/>
            <person name="Zhong F."/>
            <person name="He L."/>
            <person name="Yu J."/>
            <person name="Yao G."/>
            <person name="Jiang H."/>
            <person name="Qian L."/>
            <person name="Yu Y."/>
            <person name="Shu H."/>
            <person name="Chen X."/>
            <person name="Xu H."/>
            <person name="Guo M."/>
            <person name="Pan Z."/>
            <person name="Chen Y."/>
            <person name="Ge C."/>
            <person name="Yang S."/>
            <person name="Gu J."/>
        </authorList>
    </citation>
    <scope>NUCLEOTIDE SEQUENCE [LARGE SCALE MRNA] (ISOFORM 2)</scope>
</reference>
<reference key="7">
    <citation type="submission" date="2004-06" db="EMBL/GenBank/DDBJ databases">
        <title>Cloning of human full open reading frames in Gateway(TM) system entry vector (pDONR201).</title>
        <authorList>
            <person name="Ebert L."/>
            <person name="Schick M."/>
            <person name="Neubert P."/>
            <person name="Schatten R."/>
            <person name="Henze S."/>
            <person name="Korn B."/>
        </authorList>
    </citation>
    <scope>NUCLEOTIDE SEQUENCE [LARGE SCALE MRNA] (ISOFORM 1)</scope>
</reference>
<reference key="8">
    <citation type="submission" date="2005-07" db="EMBL/GenBank/DDBJ databases">
        <authorList>
            <person name="Mural R.J."/>
            <person name="Istrail S."/>
            <person name="Sutton G.G."/>
            <person name="Florea L."/>
            <person name="Halpern A.L."/>
            <person name="Mobarry C.M."/>
            <person name="Lippert R."/>
            <person name="Walenz B."/>
            <person name="Shatkay H."/>
            <person name="Dew I."/>
            <person name="Miller J.R."/>
            <person name="Flanigan M.J."/>
            <person name="Edwards N.J."/>
            <person name="Bolanos R."/>
            <person name="Fasulo D."/>
            <person name="Halldorsson B.V."/>
            <person name="Hannenhalli S."/>
            <person name="Turner R."/>
            <person name="Yooseph S."/>
            <person name="Lu F."/>
            <person name="Nusskern D.R."/>
            <person name="Shue B.C."/>
            <person name="Zheng X.H."/>
            <person name="Zhong F."/>
            <person name="Delcher A.L."/>
            <person name="Huson D.H."/>
            <person name="Kravitz S.A."/>
            <person name="Mouchard L."/>
            <person name="Reinert K."/>
            <person name="Remington K.A."/>
            <person name="Clark A.G."/>
            <person name="Waterman M.S."/>
            <person name="Eichler E.E."/>
            <person name="Adams M.D."/>
            <person name="Hunkapiller M.W."/>
            <person name="Myers E.W."/>
            <person name="Venter J.C."/>
        </authorList>
    </citation>
    <scope>NUCLEOTIDE SEQUENCE [LARGE SCALE GENOMIC DNA]</scope>
</reference>
<reference key="9">
    <citation type="journal article" date="2004" name="Genome Res.">
        <title>The status, quality, and expansion of the NIH full-length cDNA project: the Mammalian Gene Collection (MGC).</title>
        <authorList>
            <consortium name="The MGC Project Team"/>
        </authorList>
    </citation>
    <scope>NUCLEOTIDE SEQUENCE [LARGE SCALE MRNA] (ISOFORM 1)</scope>
    <source>
        <tissue>Kidney</tissue>
    </source>
</reference>
<reference key="10">
    <citation type="journal article" date="2003" name="Proc. Natl. Acad. Sci. U.S.A.">
        <title>Immunomic analysis of human sarcoma.</title>
        <authorList>
            <person name="Lee S.-Y."/>
            <person name="Obata Y."/>
            <person name="Yoshida M."/>
            <person name="Stockert E."/>
            <person name="Williamson B."/>
            <person name="Jungbluth A.A."/>
            <person name="Chen Y.-T."/>
            <person name="Old L.J."/>
            <person name="Scanlan M.J."/>
        </authorList>
    </citation>
    <scope>NUCLEOTIDE SEQUENCE [MRNA] OF 147-455</scope>
</reference>
<reference key="11">
    <citation type="journal article" date="2013" name="J. Proteome Res.">
        <title>Toward a comprehensive characterization of a human cancer cell phosphoproteome.</title>
        <authorList>
            <person name="Zhou H."/>
            <person name="Di Palma S."/>
            <person name="Preisinger C."/>
            <person name="Peng M."/>
            <person name="Polat A.N."/>
            <person name="Heck A.J."/>
            <person name="Mohammed S."/>
        </authorList>
    </citation>
    <scope>PHOSPHORYLATION [LARGE SCALE ANALYSIS] AT SER-4</scope>
    <scope>IDENTIFICATION BY MASS SPECTROMETRY [LARGE SCALE ANALYSIS]</scope>
    <source>
        <tissue>Erythroleukemia</tissue>
    </source>
</reference>
<reference key="12">
    <citation type="journal article" date="2014" name="Genes Cells">
        <title>CCAR1/CoCoA pair-mediated recruitment of the Mediator defines a novel pathway for GATA1 function.</title>
        <authorList>
            <person name="Mizuta S."/>
            <person name="Minami T."/>
            <person name="Fujita H."/>
            <person name="Kaminaga C."/>
            <person name="Matsui K."/>
            <person name="Ishino R."/>
            <person name="Fujita A."/>
            <person name="Oda K."/>
            <person name="Kawai A."/>
            <person name="Hasegawa N."/>
            <person name="Urahama N."/>
            <person name="Roeder R.G."/>
            <person name="Ito M."/>
        </authorList>
    </citation>
    <scope>FUNCTION</scope>
</reference>